<organism>
    <name type="scientific">Salmonella enteritidis PT4 (strain P125109)</name>
    <dbReference type="NCBI Taxonomy" id="550537"/>
    <lineage>
        <taxon>Bacteria</taxon>
        <taxon>Pseudomonadati</taxon>
        <taxon>Pseudomonadota</taxon>
        <taxon>Gammaproteobacteria</taxon>
        <taxon>Enterobacterales</taxon>
        <taxon>Enterobacteriaceae</taxon>
        <taxon>Salmonella</taxon>
    </lineage>
</organism>
<sequence length="299" mass="33078">MTKVGLRIDVDTLRGTREGVPRLLATLHRHGVQASFFFSVGPDNMGRHLWRLIRPRFLWKMLRSNAASLYGWDILLAGTAWPGKNIGNANAGIIRETATYHETGLHAWDHHAWQTHSGHWSIRQLEEDIARGITALEAIIGKPVTCSAAAGWRADGRVVRAKEPFNLRYNSDCRGTTLFRPLLMPGQTGTPQIPVTLPTWDEVIGPAVQAQSFNTWIISRMLQDKGTPVYTIHAEVEGIVHQPLFEDLLVRARDAGITFCPLGELLPTSPESLPLGQIVRGHIPGREGWLGCQQAASAS</sequence>
<comment type="function">
    <text evidence="1">Catalyzes the deformylation of 4-deoxy-4-formamido-L-arabinose-phosphoundecaprenol to 4-amino-4-deoxy-L-arabinose-phosphoundecaprenol. The modified arabinose is attached to lipid A and is required for resistance to polymyxin and cationic antimicrobial peptides.</text>
</comment>
<comment type="catalytic activity">
    <reaction evidence="1">
        <text>4-deoxy-4-formamido-alpha-L-arabinopyranosyl di-trans,octa-cis-undecaprenyl phosphate + H2O = 4-amino-4-deoxy-alpha-L-arabinopyranosyl di-trans,octa-cis-undecaprenyl phosphate + formate</text>
        <dbReference type="Rhea" id="RHEA:27734"/>
        <dbReference type="ChEBI" id="CHEBI:15377"/>
        <dbReference type="ChEBI" id="CHEBI:15740"/>
        <dbReference type="ChEBI" id="CHEBI:58909"/>
        <dbReference type="ChEBI" id="CHEBI:60463"/>
        <dbReference type="EC" id="3.5.1.n3"/>
    </reaction>
</comment>
<comment type="pathway">
    <text evidence="1">Glycolipid biosynthesis; 4-amino-4-deoxy-alpha-L-arabinose undecaprenyl phosphate biosynthesis; 4-amino-4-deoxy-alpha-L-arabinose undecaprenyl phosphate from UDP-4-deoxy-4-formamido-beta-L-arabinose and undecaprenyl phosphate: step 2/2.</text>
</comment>
<comment type="pathway">
    <text evidence="1">Bacterial outer membrane biogenesis; lipopolysaccharide biosynthesis.</text>
</comment>
<comment type="similarity">
    <text evidence="1">Belongs to the polysaccharide deacetylase family. ArnD deformylase subfamily.</text>
</comment>
<accession>B5R273</accession>
<dbReference type="EC" id="3.5.1.n3" evidence="1"/>
<dbReference type="EMBL" id="AM933172">
    <property type="protein sequence ID" value="CAR33866.1"/>
    <property type="molecule type" value="Genomic_DNA"/>
</dbReference>
<dbReference type="RefSeq" id="WP_000169766.1">
    <property type="nucleotide sequence ID" value="NC_011294.1"/>
</dbReference>
<dbReference type="SMR" id="B5R273"/>
<dbReference type="KEGG" id="set:SEN2282"/>
<dbReference type="HOGENOM" id="CLU_084199_0_0_6"/>
<dbReference type="UniPathway" id="UPA00030"/>
<dbReference type="UniPathway" id="UPA00036">
    <property type="reaction ID" value="UER00496"/>
</dbReference>
<dbReference type="Proteomes" id="UP000000613">
    <property type="component" value="Chromosome"/>
</dbReference>
<dbReference type="GO" id="GO:0016020">
    <property type="term" value="C:membrane"/>
    <property type="evidence" value="ECO:0007669"/>
    <property type="project" value="GOC"/>
</dbReference>
<dbReference type="GO" id="GO:0016811">
    <property type="term" value="F:hydrolase activity, acting on carbon-nitrogen (but not peptide) bonds, in linear amides"/>
    <property type="evidence" value="ECO:0007669"/>
    <property type="project" value="UniProtKB-UniRule"/>
</dbReference>
<dbReference type="GO" id="GO:0036108">
    <property type="term" value="P:4-amino-4-deoxy-alpha-L-arabinopyranosyl undecaprenyl phosphate biosynthetic process"/>
    <property type="evidence" value="ECO:0007669"/>
    <property type="project" value="UniProtKB-UniRule"/>
</dbReference>
<dbReference type="GO" id="GO:0009245">
    <property type="term" value="P:lipid A biosynthetic process"/>
    <property type="evidence" value="ECO:0007669"/>
    <property type="project" value="UniProtKB-UniRule"/>
</dbReference>
<dbReference type="GO" id="GO:0009103">
    <property type="term" value="P:lipopolysaccharide biosynthetic process"/>
    <property type="evidence" value="ECO:0007669"/>
    <property type="project" value="UniProtKB-UniRule"/>
</dbReference>
<dbReference type="GO" id="GO:0046677">
    <property type="term" value="P:response to antibiotic"/>
    <property type="evidence" value="ECO:0007669"/>
    <property type="project" value="UniProtKB-KW"/>
</dbReference>
<dbReference type="Gene3D" id="3.20.20.370">
    <property type="entry name" value="Glycoside hydrolase/deacetylase"/>
    <property type="match status" value="1"/>
</dbReference>
<dbReference type="HAMAP" id="MF_01870">
    <property type="entry name" value="ArnD"/>
    <property type="match status" value="1"/>
</dbReference>
<dbReference type="InterPro" id="IPR023557">
    <property type="entry name" value="ArnD"/>
</dbReference>
<dbReference type="InterPro" id="IPR011330">
    <property type="entry name" value="Glyco_hydro/deAcase_b/a-brl"/>
</dbReference>
<dbReference type="InterPro" id="IPR002509">
    <property type="entry name" value="NODB_dom"/>
</dbReference>
<dbReference type="InterPro" id="IPR050248">
    <property type="entry name" value="Polysacc_deacetylase_ArnD"/>
</dbReference>
<dbReference type="NCBIfam" id="NF011923">
    <property type="entry name" value="PRK15394.1"/>
    <property type="match status" value="1"/>
</dbReference>
<dbReference type="PANTHER" id="PTHR10587:SF137">
    <property type="entry name" value="4-DEOXY-4-FORMAMIDO-L-ARABINOSE-PHOSPHOUNDECAPRENOL DEFORMYLASE ARND-RELATED"/>
    <property type="match status" value="1"/>
</dbReference>
<dbReference type="PANTHER" id="PTHR10587">
    <property type="entry name" value="GLYCOSYL TRANSFERASE-RELATED"/>
    <property type="match status" value="1"/>
</dbReference>
<dbReference type="Pfam" id="PF01522">
    <property type="entry name" value="Polysacc_deac_1"/>
    <property type="match status" value="1"/>
</dbReference>
<dbReference type="SUPFAM" id="SSF88713">
    <property type="entry name" value="Glycoside hydrolase/deacetylase"/>
    <property type="match status" value="1"/>
</dbReference>
<dbReference type="PROSITE" id="PS51677">
    <property type="entry name" value="NODB"/>
    <property type="match status" value="1"/>
</dbReference>
<gene>
    <name evidence="1" type="primary">arnD</name>
    <name type="ordered locus">SEN2282</name>
</gene>
<reference key="1">
    <citation type="journal article" date="2008" name="Genome Res.">
        <title>Comparative genome analysis of Salmonella enteritidis PT4 and Salmonella gallinarum 287/91 provides insights into evolutionary and host adaptation pathways.</title>
        <authorList>
            <person name="Thomson N.R."/>
            <person name="Clayton D.J."/>
            <person name="Windhorst D."/>
            <person name="Vernikos G."/>
            <person name="Davidson S."/>
            <person name="Churcher C."/>
            <person name="Quail M.A."/>
            <person name="Stevens M."/>
            <person name="Jones M.A."/>
            <person name="Watson M."/>
            <person name="Barron A."/>
            <person name="Layton A."/>
            <person name="Pickard D."/>
            <person name="Kingsley R.A."/>
            <person name="Bignell A."/>
            <person name="Clark L."/>
            <person name="Harris B."/>
            <person name="Ormond D."/>
            <person name="Abdellah Z."/>
            <person name="Brooks K."/>
            <person name="Cherevach I."/>
            <person name="Chillingworth T."/>
            <person name="Woodward J."/>
            <person name="Norberczak H."/>
            <person name="Lord A."/>
            <person name="Arrowsmith C."/>
            <person name="Jagels K."/>
            <person name="Moule S."/>
            <person name="Mungall K."/>
            <person name="Saunders M."/>
            <person name="Whitehead S."/>
            <person name="Chabalgoity J.A."/>
            <person name="Maskell D."/>
            <person name="Humphreys T."/>
            <person name="Roberts M."/>
            <person name="Barrow P.A."/>
            <person name="Dougan G."/>
            <person name="Parkhill J."/>
        </authorList>
    </citation>
    <scope>NUCLEOTIDE SEQUENCE [LARGE SCALE GENOMIC DNA]</scope>
    <source>
        <strain>P125109</strain>
    </source>
</reference>
<feature type="chain" id="PRO_0000383530" description="Probable 4-deoxy-4-formamido-L-arabinose-phosphoundecaprenol deformylase ArnD">
    <location>
        <begin position="1"/>
        <end position="299"/>
    </location>
</feature>
<feature type="domain" description="NodB homology" evidence="1">
    <location>
        <begin position="2"/>
        <end position="260"/>
    </location>
</feature>
<evidence type="ECO:0000255" key="1">
    <source>
        <dbReference type="HAMAP-Rule" id="MF_01870"/>
    </source>
</evidence>
<protein>
    <recommendedName>
        <fullName evidence="1">Probable 4-deoxy-4-formamido-L-arabinose-phosphoundecaprenol deformylase ArnD</fullName>
        <ecNumber evidence="1">3.5.1.n3</ecNumber>
    </recommendedName>
</protein>
<keyword id="KW-0046">Antibiotic resistance</keyword>
<keyword id="KW-0378">Hydrolase</keyword>
<keyword id="KW-0441">Lipid A biosynthesis</keyword>
<keyword id="KW-0444">Lipid biosynthesis</keyword>
<keyword id="KW-0443">Lipid metabolism</keyword>
<keyword id="KW-0448">Lipopolysaccharide biosynthesis</keyword>
<proteinExistence type="inferred from homology"/>
<name>ARND_SALEP</name>